<gene>
    <name evidence="1" type="primary">gltX</name>
    <name type="ordered locus">AHA_3447</name>
</gene>
<organism>
    <name type="scientific">Aeromonas hydrophila subsp. hydrophila (strain ATCC 7966 / DSM 30187 / BCRC 13018 / CCUG 14551 / JCM 1027 / KCTC 2358 / NCIMB 9240 / NCTC 8049)</name>
    <dbReference type="NCBI Taxonomy" id="380703"/>
    <lineage>
        <taxon>Bacteria</taxon>
        <taxon>Pseudomonadati</taxon>
        <taxon>Pseudomonadota</taxon>
        <taxon>Gammaproteobacteria</taxon>
        <taxon>Aeromonadales</taxon>
        <taxon>Aeromonadaceae</taxon>
        <taxon>Aeromonas</taxon>
    </lineage>
</organism>
<comment type="function">
    <text evidence="1">Catalyzes the attachment of glutamate to tRNA(Glu) in a two-step reaction: glutamate is first activated by ATP to form Glu-AMP and then transferred to the acceptor end of tRNA(Glu).</text>
</comment>
<comment type="catalytic activity">
    <reaction evidence="1">
        <text>tRNA(Glu) + L-glutamate + ATP = L-glutamyl-tRNA(Glu) + AMP + diphosphate</text>
        <dbReference type="Rhea" id="RHEA:23540"/>
        <dbReference type="Rhea" id="RHEA-COMP:9663"/>
        <dbReference type="Rhea" id="RHEA-COMP:9680"/>
        <dbReference type="ChEBI" id="CHEBI:29985"/>
        <dbReference type="ChEBI" id="CHEBI:30616"/>
        <dbReference type="ChEBI" id="CHEBI:33019"/>
        <dbReference type="ChEBI" id="CHEBI:78442"/>
        <dbReference type="ChEBI" id="CHEBI:78520"/>
        <dbReference type="ChEBI" id="CHEBI:456215"/>
        <dbReference type="EC" id="6.1.1.17"/>
    </reaction>
</comment>
<comment type="cofactor">
    <cofactor evidence="1">
        <name>Zn(2+)</name>
        <dbReference type="ChEBI" id="CHEBI:29105"/>
    </cofactor>
    <text evidence="1">Binds 1 zinc ion per subunit.</text>
</comment>
<comment type="subunit">
    <text evidence="1">Monomer.</text>
</comment>
<comment type="subcellular location">
    <subcellularLocation>
        <location evidence="1">Cytoplasm</location>
    </subcellularLocation>
</comment>
<comment type="similarity">
    <text evidence="1">Belongs to the class-I aminoacyl-tRNA synthetase family. Glutamate--tRNA ligase type 1 subfamily.</text>
</comment>
<evidence type="ECO:0000255" key="1">
    <source>
        <dbReference type="HAMAP-Rule" id="MF_00022"/>
    </source>
</evidence>
<keyword id="KW-0030">Aminoacyl-tRNA synthetase</keyword>
<keyword id="KW-0067">ATP-binding</keyword>
<keyword id="KW-0963">Cytoplasm</keyword>
<keyword id="KW-0436">Ligase</keyword>
<keyword id="KW-0479">Metal-binding</keyword>
<keyword id="KW-0547">Nucleotide-binding</keyword>
<keyword id="KW-0648">Protein biosynthesis</keyword>
<keyword id="KW-1185">Reference proteome</keyword>
<keyword id="KW-0862">Zinc</keyword>
<protein>
    <recommendedName>
        <fullName evidence="1">Glutamate--tRNA ligase</fullName>
        <ecNumber evidence="1">6.1.1.17</ecNumber>
    </recommendedName>
    <alternativeName>
        <fullName evidence="1">Glutamyl-tRNA synthetase</fullName>
        <shortName evidence="1">GluRS</shortName>
    </alternativeName>
</protein>
<proteinExistence type="inferred from homology"/>
<sequence length="471" mass="52782">MKVKTRFAPSPTGFLHVGGARTALYSWLFAKNQGGEFVLRIEDTDLERSTQEAIDAIIEGMEWLELNWDEGPYYQTKRFDRYNGLIDEMLADGRAYKCYCSKERLEALREGQMANGEKPRYDGKCRDHAHDHPADAPHVIRFRNPTEGSVVFDDHVRGRIEFANTELDDLIIRRTDGAPTYNFCVVVDDWDMEITHVVRGEDHINNTPRQINIYKALNAPVPEFAHVSMILGDDGAKLSKRHGAVSVMQYRDDGYLPEALLNYLVRLGWSHGDQEIFSLEEMIKLFSLDAISKSASAFNTDKLLWLNNHYMRSLDPAYVAKHLAWHMADQKIDTSKGPALADVVTLLAERCNTLVEMAAQSRYLFEEYEAIDEAAAKKHLRGVAAEPLTLAKAKLAALDSWTTEALHELIEATAAELGQGMGKVGMPLRVAVTGLGQSPGIDAVMALVGKERVLARIDRALAYIEARMAAE</sequence>
<dbReference type="EC" id="6.1.1.17" evidence="1"/>
<dbReference type="EMBL" id="CP000462">
    <property type="protein sequence ID" value="ABK38846.1"/>
    <property type="molecule type" value="Genomic_DNA"/>
</dbReference>
<dbReference type="RefSeq" id="WP_011707206.1">
    <property type="nucleotide sequence ID" value="NC_008570.1"/>
</dbReference>
<dbReference type="RefSeq" id="YP_857931.1">
    <property type="nucleotide sequence ID" value="NC_008570.1"/>
</dbReference>
<dbReference type="SMR" id="A0KNT0"/>
<dbReference type="STRING" id="380703.AHA_3447"/>
<dbReference type="EnsemblBacteria" id="ABK38846">
    <property type="protein sequence ID" value="ABK38846"/>
    <property type="gene ID" value="AHA_3447"/>
</dbReference>
<dbReference type="GeneID" id="4489694"/>
<dbReference type="KEGG" id="aha:AHA_3447"/>
<dbReference type="PATRIC" id="fig|380703.7.peg.3444"/>
<dbReference type="eggNOG" id="COG0008">
    <property type="taxonomic scope" value="Bacteria"/>
</dbReference>
<dbReference type="HOGENOM" id="CLU_015768_6_3_6"/>
<dbReference type="OrthoDB" id="9807503at2"/>
<dbReference type="Proteomes" id="UP000000756">
    <property type="component" value="Chromosome"/>
</dbReference>
<dbReference type="GO" id="GO:0005829">
    <property type="term" value="C:cytosol"/>
    <property type="evidence" value="ECO:0007669"/>
    <property type="project" value="TreeGrafter"/>
</dbReference>
<dbReference type="GO" id="GO:0005524">
    <property type="term" value="F:ATP binding"/>
    <property type="evidence" value="ECO:0007669"/>
    <property type="project" value="UniProtKB-UniRule"/>
</dbReference>
<dbReference type="GO" id="GO:0004818">
    <property type="term" value="F:glutamate-tRNA ligase activity"/>
    <property type="evidence" value="ECO:0007669"/>
    <property type="project" value="UniProtKB-UniRule"/>
</dbReference>
<dbReference type="GO" id="GO:0000049">
    <property type="term" value="F:tRNA binding"/>
    <property type="evidence" value="ECO:0007669"/>
    <property type="project" value="InterPro"/>
</dbReference>
<dbReference type="GO" id="GO:0008270">
    <property type="term" value="F:zinc ion binding"/>
    <property type="evidence" value="ECO:0007669"/>
    <property type="project" value="UniProtKB-UniRule"/>
</dbReference>
<dbReference type="GO" id="GO:0006424">
    <property type="term" value="P:glutamyl-tRNA aminoacylation"/>
    <property type="evidence" value="ECO:0007669"/>
    <property type="project" value="UniProtKB-UniRule"/>
</dbReference>
<dbReference type="CDD" id="cd00808">
    <property type="entry name" value="GluRS_core"/>
    <property type="match status" value="1"/>
</dbReference>
<dbReference type="FunFam" id="3.40.50.620:FF:000007">
    <property type="entry name" value="Glutamate--tRNA ligase"/>
    <property type="match status" value="1"/>
</dbReference>
<dbReference type="Gene3D" id="1.10.10.350">
    <property type="match status" value="1"/>
</dbReference>
<dbReference type="Gene3D" id="3.40.50.620">
    <property type="entry name" value="HUPs"/>
    <property type="match status" value="1"/>
</dbReference>
<dbReference type="HAMAP" id="MF_00022">
    <property type="entry name" value="Glu_tRNA_synth_type1"/>
    <property type="match status" value="1"/>
</dbReference>
<dbReference type="InterPro" id="IPR045462">
    <property type="entry name" value="aa-tRNA-synth_I_cd-bd"/>
</dbReference>
<dbReference type="InterPro" id="IPR020751">
    <property type="entry name" value="aa-tRNA-synth_I_codon-bd_sub2"/>
</dbReference>
<dbReference type="InterPro" id="IPR001412">
    <property type="entry name" value="aa-tRNA-synth_I_CS"/>
</dbReference>
<dbReference type="InterPro" id="IPR008925">
    <property type="entry name" value="aa_tRNA-synth_I_cd-bd_sf"/>
</dbReference>
<dbReference type="InterPro" id="IPR004527">
    <property type="entry name" value="Glu-tRNA-ligase_bac/mito"/>
</dbReference>
<dbReference type="InterPro" id="IPR000924">
    <property type="entry name" value="Glu/Gln-tRNA-synth"/>
</dbReference>
<dbReference type="InterPro" id="IPR020058">
    <property type="entry name" value="Glu/Gln-tRNA-synth_Ib_cat-dom"/>
</dbReference>
<dbReference type="InterPro" id="IPR049940">
    <property type="entry name" value="GluQ/Sye"/>
</dbReference>
<dbReference type="InterPro" id="IPR033910">
    <property type="entry name" value="GluRS_core"/>
</dbReference>
<dbReference type="InterPro" id="IPR014729">
    <property type="entry name" value="Rossmann-like_a/b/a_fold"/>
</dbReference>
<dbReference type="NCBIfam" id="TIGR00464">
    <property type="entry name" value="gltX_bact"/>
    <property type="match status" value="1"/>
</dbReference>
<dbReference type="PANTHER" id="PTHR43311">
    <property type="entry name" value="GLUTAMATE--TRNA LIGASE"/>
    <property type="match status" value="1"/>
</dbReference>
<dbReference type="PANTHER" id="PTHR43311:SF2">
    <property type="entry name" value="GLUTAMATE--TRNA LIGASE, MITOCHONDRIAL-RELATED"/>
    <property type="match status" value="1"/>
</dbReference>
<dbReference type="Pfam" id="PF19269">
    <property type="entry name" value="Anticodon_2"/>
    <property type="match status" value="1"/>
</dbReference>
<dbReference type="Pfam" id="PF00749">
    <property type="entry name" value="tRNA-synt_1c"/>
    <property type="match status" value="1"/>
</dbReference>
<dbReference type="PRINTS" id="PR00987">
    <property type="entry name" value="TRNASYNTHGLU"/>
</dbReference>
<dbReference type="SUPFAM" id="SSF48163">
    <property type="entry name" value="An anticodon-binding domain of class I aminoacyl-tRNA synthetases"/>
    <property type="match status" value="1"/>
</dbReference>
<dbReference type="SUPFAM" id="SSF52374">
    <property type="entry name" value="Nucleotidylyl transferase"/>
    <property type="match status" value="1"/>
</dbReference>
<dbReference type="PROSITE" id="PS00178">
    <property type="entry name" value="AA_TRNA_LIGASE_I"/>
    <property type="match status" value="1"/>
</dbReference>
<reference key="1">
    <citation type="journal article" date="2006" name="J. Bacteriol.">
        <title>Genome sequence of Aeromonas hydrophila ATCC 7966T: jack of all trades.</title>
        <authorList>
            <person name="Seshadri R."/>
            <person name="Joseph S.W."/>
            <person name="Chopra A.K."/>
            <person name="Sha J."/>
            <person name="Shaw J."/>
            <person name="Graf J."/>
            <person name="Haft D.H."/>
            <person name="Wu M."/>
            <person name="Ren Q."/>
            <person name="Rosovitz M.J."/>
            <person name="Madupu R."/>
            <person name="Tallon L."/>
            <person name="Kim M."/>
            <person name="Jin S."/>
            <person name="Vuong H."/>
            <person name="Stine O.C."/>
            <person name="Ali A."/>
            <person name="Horneman A.J."/>
            <person name="Heidelberg J.F."/>
        </authorList>
    </citation>
    <scope>NUCLEOTIDE SEQUENCE [LARGE SCALE GENOMIC DNA]</scope>
    <source>
        <strain>ATCC 7966 / DSM 30187 / BCRC 13018 / CCUG 14551 / JCM 1027 / KCTC 2358 / NCIMB 9240 / NCTC 8049</strain>
    </source>
</reference>
<accession>A0KNT0</accession>
<name>SYE_AERHH</name>
<feature type="chain" id="PRO_1000001867" description="Glutamate--tRNA ligase">
    <location>
        <begin position="1"/>
        <end position="471"/>
    </location>
</feature>
<feature type="short sequence motif" description="'HIGH' region" evidence="1">
    <location>
        <begin position="9"/>
        <end position="19"/>
    </location>
</feature>
<feature type="short sequence motif" description="'KMSKS' region" evidence="1">
    <location>
        <begin position="237"/>
        <end position="241"/>
    </location>
</feature>
<feature type="binding site" evidence="1">
    <location>
        <position position="98"/>
    </location>
    <ligand>
        <name>Zn(2+)</name>
        <dbReference type="ChEBI" id="CHEBI:29105"/>
    </ligand>
</feature>
<feature type="binding site" evidence="1">
    <location>
        <position position="100"/>
    </location>
    <ligand>
        <name>Zn(2+)</name>
        <dbReference type="ChEBI" id="CHEBI:29105"/>
    </ligand>
</feature>
<feature type="binding site" evidence="1">
    <location>
        <position position="125"/>
    </location>
    <ligand>
        <name>Zn(2+)</name>
        <dbReference type="ChEBI" id="CHEBI:29105"/>
    </ligand>
</feature>
<feature type="binding site" evidence="1">
    <location>
        <position position="127"/>
    </location>
    <ligand>
        <name>Zn(2+)</name>
        <dbReference type="ChEBI" id="CHEBI:29105"/>
    </ligand>
</feature>
<feature type="binding site" evidence="1">
    <location>
        <position position="240"/>
    </location>
    <ligand>
        <name>ATP</name>
        <dbReference type="ChEBI" id="CHEBI:30616"/>
    </ligand>
</feature>